<organism>
    <name type="scientific">Porphyromonas gingivalis (strain ATCC BAA-308 / W83)</name>
    <dbReference type="NCBI Taxonomy" id="242619"/>
    <lineage>
        <taxon>Bacteria</taxon>
        <taxon>Pseudomonadati</taxon>
        <taxon>Bacteroidota</taxon>
        <taxon>Bacteroidia</taxon>
        <taxon>Bacteroidales</taxon>
        <taxon>Porphyromonadaceae</taxon>
        <taxon>Porphyromonas</taxon>
    </lineage>
</organism>
<reference key="1">
    <citation type="journal article" date="2003" name="J. Bacteriol.">
        <title>Complete genome sequence of the oral pathogenic bacterium Porphyromonas gingivalis strain W83.</title>
        <authorList>
            <person name="Nelson K.E."/>
            <person name="Fleischmann R.D."/>
            <person name="DeBoy R.T."/>
            <person name="Paulsen I.T."/>
            <person name="Fouts D.E."/>
            <person name="Eisen J.A."/>
            <person name="Daugherty S.C."/>
            <person name="Dodson R.J."/>
            <person name="Durkin A.S."/>
            <person name="Gwinn M.L."/>
            <person name="Haft D.H."/>
            <person name="Kolonay J.F."/>
            <person name="Nelson W.C."/>
            <person name="Mason T.M."/>
            <person name="Tallon L."/>
            <person name="Gray J."/>
            <person name="Granger D."/>
            <person name="Tettelin H."/>
            <person name="Dong H."/>
            <person name="Galvin J.L."/>
            <person name="Duncan M.J."/>
            <person name="Dewhirst F.E."/>
            <person name="Fraser C.M."/>
        </authorList>
    </citation>
    <scope>NUCLEOTIDE SEQUENCE [LARGE SCALE GENOMIC DNA]</scope>
    <source>
        <strain>ATCC BAA-308 / W83</strain>
    </source>
</reference>
<protein>
    <recommendedName>
        <fullName evidence="1">DNA ligase</fullName>
        <ecNumber evidence="1">6.5.1.2</ecNumber>
    </recommendedName>
    <alternativeName>
        <fullName evidence="1">Polydeoxyribonucleotide synthase [NAD(+)]</fullName>
    </alternativeName>
</protein>
<accession>Q7MV47</accession>
<comment type="function">
    <text evidence="1">DNA ligase that catalyzes the formation of phosphodiester linkages between 5'-phosphoryl and 3'-hydroxyl groups in double-stranded DNA using NAD as a coenzyme and as the energy source for the reaction. It is essential for DNA replication and repair of damaged DNA.</text>
</comment>
<comment type="catalytic activity">
    <reaction evidence="1">
        <text>NAD(+) + (deoxyribonucleotide)n-3'-hydroxyl + 5'-phospho-(deoxyribonucleotide)m = (deoxyribonucleotide)n+m + AMP + beta-nicotinamide D-nucleotide.</text>
        <dbReference type="EC" id="6.5.1.2"/>
    </reaction>
</comment>
<comment type="cofactor">
    <cofactor evidence="1">
        <name>Mg(2+)</name>
        <dbReference type="ChEBI" id="CHEBI:18420"/>
    </cofactor>
    <cofactor evidence="1">
        <name>Mn(2+)</name>
        <dbReference type="ChEBI" id="CHEBI:29035"/>
    </cofactor>
</comment>
<comment type="similarity">
    <text evidence="1">Belongs to the NAD-dependent DNA ligase family. LigA subfamily.</text>
</comment>
<keyword id="KW-0227">DNA damage</keyword>
<keyword id="KW-0234">DNA repair</keyword>
<keyword id="KW-0235">DNA replication</keyword>
<keyword id="KW-0436">Ligase</keyword>
<keyword id="KW-0460">Magnesium</keyword>
<keyword id="KW-0464">Manganese</keyword>
<keyword id="KW-0479">Metal-binding</keyword>
<keyword id="KW-0520">NAD</keyword>
<keyword id="KW-1185">Reference proteome</keyword>
<keyword id="KW-0862">Zinc</keyword>
<evidence type="ECO:0000255" key="1">
    <source>
        <dbReference type="HAMAP-Rule" id="MF_01588"/>
    </source>
</evidence>
<evidence type="ECO:0000256" key="2">
    <source>
        <dbReference type="SAM" id="MobiDB-lite"/>
    </source>
</evidence>
<name>DNLJ_PORGI</name>
<dbReference type="EC" id="6.5.1.2" evidence="1"/>
<dbReference type="EMBL" id="AE015924">
    <property type="protein sequence ID" value="AAQ66336.1"/>
    <property type="molecule type" value="Genomic_DNA"/>
</dbReference>
<dbReference type="RefSeq" id="WP_005874735.1">
    <property type="nucleotide sequence ID" value="NC_002950.2"/>
</dbReference>
<dbReference type="SMR" id="Q7MV47"/>
<dbReference type="STRING" id="242619.PG_1253"/>
<dbReference type="EnsemblBacteria" id="AAQ66336">
    <property type="protein sequence ID" value="AAQ66336"/>
    <property type="gene ID" value="PG_1253"/>
</dbReference>
<dbReference type="KEGG" id="pgi:PG_1253"/>
<dbReference type="PATRIC" id="fig|242619.8.peg.1162"/>
<dbReference type="eggNOG" id="COG0272">
    <property type="taxonomic scope" value="Bacteria"/>
</dbReference>
<dbReference type="HOGENOM" id="CLU_007764_2_1_10"/>
<dbReference type="BioCyc" id="PGIN242619:G1G02-1166-MONOMER"/>
<dbReference type="Proteomes" id="UP000000588">
    <property type="component" value="Chromosome"/>
</dbReference>
<dbReference type="GO" id="GO:0005829">
    <property type="term" value="C:cytosol"/>
    <property type="evidence" value="ECO:0007669"/>
    <property type="project" value="TreeGrafter"/>
</dbReference>
<dbReference type="GO" id="GO:0003677">
    <property type="term" value="F:DNA binding"/>
    <property type="evidence" value="ECO:0007669"/>
    <property type="project" value="InterPro"/>
</dbReference>
<dbReference type="GO" id="GO:0003911">
    <property type="term" value="F:DNA ligase (NAD+) activity"/>
    <property type="evidence" value="ECO:0007669"/>
    <property type="project" value="UniProtKB-UniRule"/>
</dbReference>
<dbReference type="GO" id="GO:0046872">
    <property type="term" value="F:metal ion binding"/>
    <property type="evidence" value="ECO:0007669"/>
    <property type="project" value="UniProtKB-KW"/>
</dbReference>
<dbReference type="GO" id="GO:0006281">
    <property type="term" value="P:DNA repair"/>
    <property type="evidence" value="ECO:0007669"/>
    <property type="project" value="UniProtKB-KW"/>
</dbReference>
<dbReference type="GO" id="GO:0006260">
    <property type="term" value="P:DNA replication"/>
    <property type="evidence" value="ECO:0007669"/>
    <property type="project" value="UniProtKB-KW"/>
</dbReference>
<dbReference type="CDD" id="cd17748">
    <property type="entry name" value="BRCT_DNA_ligase_like"/>
    <property type="match status" value="1"/>
</dbReference>
<dbReference type="CDD" id="cd00114">
    <property type="entry name" value="LIGANc"/>
    <property type="match status" value="1"/>
</dbReference>
<dbReference type="FunFam" id="1.10.150.20:FF:000006">
    <property type="entry name" value="DNA ligase"/>
    <property type="match status" value="1"/>
</dbReference>
<dbReference type="FunFam" id="1.10.287.610:FF:000002">
    <property type="entry name" value="DNA ligase"/>
    <property type="match status" value="1"/>
</dbReference>
<dbReference type="FunFam" id="3.30.470.30:FF:000001">
    <property type="entry name" value="DNA ligase"/>
    <property type="match status" value="1"/>
</dbReference>
<dbReference type="Gene3D" id="6.20.10.30">
    <property type="match status" value="1"/>
</dbReference>
<dbReference type="Gene3D" id="1.10.150.20">
    <property type="entry name" value="5' to 3' exonuclease, C-terminal subdomain"/>
    <property type="match status" value="2"/>
</dbReference>
<dbReference type="Gene3D" id="3.40.50.10190">
    <property type="entry name" value="BRCT domain"/>
    <property type="match status" value="1"/>
</dbReference>
<dbReference type="Gene3D" id="3.30.470.30">
    <property type="entry name" value="DNA ligase/mRNA capping enzyme"/>
    <property type="match status" value="1"/>
</dbReference>
<dbReference type="Gene3D" id="1.10.287.610">
    <property type="entry name" value="Helix hairpin bin"/>
    <property type="match status" value="1"/>
</dbReference>
<dbReference type="Gene3D" id="2.40.50.140">
    <property type="entry name" value="Nucleic acid-binding proteins"/>
    <property type="match status" value="1"/>
</dbReference>
<dbReference type="HAMAP" id="MF_01588">
    <property type="entry name" value="DNA_ligase_A"/>
    <property type="match status" value="1"/>
</dbReference>
<dbReference type="InterPro" id="IPR001357">
    <property type="entry name" value="BRCT_dom"/>
</dbReference>
<dbReference type="InterPro" id="IPR036420">
    <property type="entry name" value="BRCT_dom_sf"/>
</dbReference>
<dbReference type="InterPro" id="IPR041663">
    <property type="entry name" value="DisA/LigA_HHH"/>
</dbReference>
<dbReference type="InterPro" id="IPR001679">
    <property type="entry name" value="DNA_ligase"/>
</dbReference>
<dbReference type="InterPro" id="IPR018239">
    <property type="entry name" value="DNA_ligase_AS"/>
</dbReference>
<dbReference type="InterPro" id="IPR033136">
    <property type="entry name" value="DNA_ligase_CS"/>
</dbReference>
<dbReference type="InterPro" id="IPR013839">
    <property type="entry name" value="DNAligase_adenylation"/>
</dbReference>
<dbReference type="InterPro" id="IPR013840">
    <property type="entry name" value="DNAligase_N"/>
</dbReference>
<dbReference type="InterPro" id="IPR003583">
    <property type="entry name" value="Hlx-hairpin-Hlx_DNA-bd_motif"/>
</dbReference>
<dbReference type="InterPro" id="IPR012340">
    <property type="entry name" value="NA-bd_OB-fold"/>
</dbReference>
<dbReference type="InterPro" id="IPR004150">
    <property type="entry name" value="NAD_DNA_ligase_OB"/>
</dbReference>
<dbReference type="InterPro" id="IPR010994">
    <property type="entry name" value="RuvA_2-like"/>
</dbReference>
<dbReference type="InterPro" id="IPR004149">
    <property type="entry name" value="Znf_DNAligase_C4"/>
</dbReference>
<dbReference type="NCBIfam" id="TIGR00575">
    <property type="entry name" value="dnlj"/>
    <property type="match status" value="1"/>
</dbReference>
<dbReference type="NCBIfam" id="NF005932">
    <property type="entry name" value="PRK07956.1"/>
    <property type="match status" value="1"/>
</dbReference>
<dbReference type="PANTHER" id="PTHR23389">
    <property type="entry name" value="CHROMOSOME TRANSMISSION FIDELITY FACTOR 18"/>
    <property type="match status" value="1"/>
</dbReference>
<dbReference type="PANTHER" id="PTHR23389:SF9">
    <property type="entry name" value="DNA LIGASE"/>
    <property type="match status" value="1"/>
</dbReference>
<dbReference type="Pfam" id="PF00533">
    <property type="entry name" value="BRCT"/>
    <property type="match status" value="1"/>
</dbReference>
<dbReference type="Pfam" id="PF01653">
    <property type="entry name" value="DNA_ligase_aden"/>
    <property type="match status" value="1"/>
</dbReference>
<dbReference type="Pfam" id="PF03120">
    <property type="entry name" value="DNA_ligase_OB"/>
    <property type="match status" value="1"/>
</dbReference>
<dbReference type="Pfam" id="PF03119">
    <property type="entry name" value="DNA_ligase_ZBD"/>
    <property type="match status" value="1"/>
</dbReference>
<dbReference type="Pfam" id="PF12826">
    <property type="entry name" value="HHH_2"/>
    <property type="match status" value="1"/>
</dbReference>
<dbReference type="Pfam" id="PF14520">
    <property type="entry name" value="HHH_5"/>
    <property type="match status" value="1"/>
</dbReference>
<dbReference type="Pfam" id="PF22745">
    <property type="entry name" value="Nlig-Ia"/>
    <property type="match status" value="1"/>
</dbReference>
<dbReference type="PIRSF" id="PIRSF001604">
    <property type="entry name" value="LigA"/>
    <property type="match status" value="1"/>
</dbReference>
<dbReference type="SMART" id="SM00292">
    <property type="entry name" value="BRCT"/>
    <property type="match status" value="1"/>
</dbReference>
<dbReference type="SMART" id="SM00278">
    <property type="entry name" value="HhH1"/>
    <property type="match status" value="2"/>
</dbReference>
<dbReference type="SMART" id="SM00532">
    <property type="entry name" value="LIGANc"/>
    <property type="match status" value="1"/>
</dbReference>
<dbReference type="SUPFAM" id="SSF52113">
    <property type="entry name" value="BRCT domain"/>
    <property type="match status" value="1"/>
</dbReference>
<dbReference type="SUPFAM" id="SSF56091">
    <property type="entry name" value="DNA ligase/mRNA capping enzyme, catalytic domain"/>
    <property type="match status" value="1"/>
</dbReference>
<dbReference type="SUPFAM" id="SSF50249">
    <property type="entry name" value="Nucleic acid-binding proteins"/>
    <property type="match status" value="1"/>
</dbReference>
<dbReference type="SUPFAM" id="SSF47781">
    <property type="entry name" value="RuvA domain 2-like"/>
    <property type="match status" value="1"/>
</dbReference>
<dbReference type="PROSITE" id="PS50172">
    <property type="entry name" value="BRCT"/>
    <property type="match status" value="1"/>
</dbReference>
<dbReference type="PROSITE" id="PS01055">
    <property type="entry name" value="DNA_LIGASE_N1"/>
    <property type="match status" value="1"/>
</dbReference>
<dbReference type="PROSITE" id="PS01056">
    <property type="entry name" value="DNA_LIGASE_N2"/>
    <property type="match status" value="1"/>
</dbReference>
<gene>
    <name evidence="1" type="primary">ligA</name>
    <name type="ordered locus">PG_1253</name>
</gene>
<sequence length="669" mass="75085">MEKIVPPAVRIEELRRILREHEYRYYVLSSPTIDDFEYDAMMKQLEELEREYPEWDSPDSPTHRVGSDKTEGFASVRHDRPMLSLSNTYNYDEIGDFYRRVSEGLQGAPFEIVAELKFDGLSISLIYEDGMLVRAVTRGDGIMGDDVTANVRTIRSVPLRLRGDDYPRMLEVRGEILLPFKEFDRINAQREAEGEPLFANPRNAASGTIKQLDPHIVAGRNLDAYFYYLYSDEPLAENHYDRLMQARQWGFKVSDAVTLCCSKEEVYAFIDRFDTERLTLPVATDGIVLKVNAPAQQDLLGFTAKSPRWAIAYKYQAERVRTRLQHVSYQVGRTGAVTPVANLDPVLISGTVVRRASLHNADFIAEKDLHEGDFVYVEKGGEIIPKIVGVDTDARSIDGRPIVFTVLCPDCATPLVREQGEAAYYCPNAEGCPQQQKGRLEHYCGRKTADINIGPETIELLYSRNMIRNVADFYALTEEQLLTLPGFKKRAAAKLLDSIEASKARPYQAILFGLGIRFVGETVAKKLAAVYPSIDALAAATSEELVQIDEIGERIAAAVLHFFSLRQNRELIERLRLAGVSLEAETVSVAVSNRLAGKTVVISGTFEKRSRDEYKAMVEDNGGRMAGSVSSKTSFILAGSDMGPSKREKAEKLGVRLMSEEEFLRLIEE</sequence>
<proteinExistence type="inferred from homology"/>
<feature type="chain" id="PRO_0000313363" description="DNA ligase">
    <location>
        <begin position="1"/>
        <end position="669"/>
    </location>
</feature>
<feature type="domain" description="BRCT" evidence="1">
    <location>
        <begin position="590"/>
        <end position="669"/>
    </location>
</feature>
<feature type="region of interest" description="Disordered" evidence="2">
    <location>
        <begin position="52"/>
        <end position="71"/>
    </location>
</feature>
<feature type="compositionally biased region" description="Basic and acidic residues" evidence="2">
    <location>
        <begin position="61"/>
        <end position="71"/>
    </location>
</feature>
<feature type="active site" description="N6-AMP-lysine intermediate" evidence="1">
    <location>
        <position position="117"/>
    </location>
</feature>
<feature type="binding site" evidence="1">
    <location>
        <begin position="35"/>
        <end position="39"/>
    </location>
    <ligand>
        <name>NAD(+)</name>
        <dbReference type="ChEBI" id="CHEBI:57540"/>
    </ligand>
</feature>
<feature type="binding site" evidence="1">
    <location>
        <begin position="84"/>
        <end position="85"/>
    </location>
    <ligand>
        <name>NAD(+)</name>
        <dbReference type="ChEBI" id="CHEBI:57540"/>
    </ligand>
</feature>
<feature type="binding site" evidence="1">
    <location>
        <position position="115"/>
    </location>
    <ligand>
        <name>NAD(+)</name>
        <dbReference type="ChEBI" id="CHEBI:57540"/>
    </ligand>
</feature>
<feature type="binding site" evidence="1">
    <location>
        <position position="138"/>
    </location>
    <ligand>
        <name>NAD(+)</name>
        <dbReference type="ChEBI" id="CHEBI:57540"/>
    </ligand>
</feature>
<feature type="binding site" evidence="1">
    <location>
        <position position="175"/>
    </location>
    <ligand>
        <name>NAD(+)</name>
        <dbReference type="ChEBI" id="CHEBI:57540"/>
    </ligand>
</feature>
<feature type="binding site" evidence="1">
    <location>
        <position position="290"/>
    </location>
    <ligand>
        <name>NAD(+)</name>
        <dbReference type="ChEBI" id="CHEBI:57540"/>
    </ligand>
</feature>
<feature type="binding site" evidence="1">
    <location>
        <position position="314"/>
    </location>
    <ligand>
        <name>NAD(+)</name>
        <dbReference type="ChEBI" id="CHEBI:57540"/>
    </ligand>
</feature>
<feature type="binding site" evidence="1">
    <location>
        <position position="408"/>
    </location>
    <ligand>
        <name>Zn(2+)</name>
        <dbReference type="ChEBI" id="CHEBI:29105"/>
    </ligand>
</feature>
<feature type="binding site" evidence="1">
    <location>
        <position position="411"/>
    </location>
    <ligand>
        <name>Zn(2+)</name>
        <dbReference type="ChEBI" id="CHEBI:29105"/>
    </ligand>
</feature>
<feature type="binding site" evidence="1">
    <location>
        <position position="426"/>
    </location>
    <ligand>
        <name>Zn(2+)</name>
        <dbReference type="ChEBI" id="CHEBI:29105"/>
    </ligand>
</feature>
<feature type="binding site" evidence="1">
    <location>
        <position position="432"/>
    </location>
    <ligand>
        <name>Zn(2+)</name>
        <dbReference type="ChEBI" id="CHEBI:29105"/>
    </ligand>
</feature>